<gene>
    <name evidence="6" type="primary">Washc4</name>
    <name evidence="6" type="synonym">Kiaa1033</name>
</gene>
<organism>
    <name type="scientific">Mus musculus</name>
    <name type="common">Mouse</name>
    <dbReference type="NCBI Taxonomy" id="10090"/>
    <lineage>
        <taxon>Eukaryota</taxon>
        <taxon>Metazoa</taxon>
        <taxon>Chordata</taxon>
        <taxon>Craniata</taxon>
        <taxon>Vertebrata</taxon>
        <taxon>Euteleostomi</taxon>
        <taxon>Mammalia</taxon>
        <taxon>Eutheria</taxon>
        <taxon>Euarchontoglires</taxon>
        <taxon>Glires</taxon>
        <taxon>Rodentia</taxon>
        <taxon>Myomorpha</taxon>
        <taxon>Muroidea</taxon>
        <taxon>Muridae</taxon>
        <taxon>Murinae</taxon>
        <taxon>Mus</taxon>
        <taxon>Mus</taxon>
    </lineage>
</organism>
<sequence>MAVDTLSPDWDFDRVDDGSQKIHAEVQLKNYGRFLEEYTSQLRRIEDALDDLIGDVWDFNLDPIALKLLPYEQSSLLELIKTENKVLNKVITVYAALCCEIKKLKYEAETKFYNGLLFYGEGATDSSMVEGDCQIQMGRFVSFLQELSCFVTRCYEVVMNVIHQLAALYISNKIGPKIIETTGVHFQTMYEHLGELLTVLLTLDEIVDNHVTLKDHWTMYKRLLKSVHHNPSKFGIQEEKLKPFEKFLLKLEGQLLDGMIFQACIEQQFDSLNGGISVSKNSTFAEEFAHSIRSIFANVEAKLGEPSEIDQRDKYVGICGLFVLHFQIFRTVDKKFYKSLLDICKKVPAITLTANIIWFPDNFLIHKMPAAAKLLDRKSLQAIKIHRDTFLQQKAQSLNKDVQSYYVFVSSWMMKMESMLSKEQRMDTFAEDLTNRCNVFIQGFLYAYSISTIIKTTMNLYMSMQKPMTKTSVKALCRLIELLKAIEHMFYRRSMVVADSVSHITQHLQHQALSSISVAKKRVISDKKYSEQRLDVLSALVLAENTLNGPSTKQRRLIVSLALSVGTQMKTFKDEELFPLQVVMKKLDLISELRERVQAQCDCCFLYWHRAVFPIYLDDVYENAVDAARLHYMFSALRDCVPAMMHSRHLESHELLLDCYDKEIMDILNEHLLDKLCKEIEKDLRLSVHTHLKLDDRNPFKVGRKDLALFFSLNPIRFFNRFIDIRAYVTHYLDKTFYNLTTVALHDWATYSEMRNLATQRYGLVMTEAHLPSQTLEQGLDVLEIMRNIHIFVSRYLYNLNNQIFIERTSNNKHLNTINIRHIANSIRTHGTGIMNTTVNFTYQFLKKKFYIFSQFMYDEHIKSRLIKDIRFFREIKDQNDHKYPFDRAEKFNRGIRKLGITPEGQSYLDQFRQLISQIGNAMGYIRMIRSGGLHCSSNAIRFVPDLEDIVSFEELVKEEGLAEETLRAARHLDSVLSDHTRNSAEGTEYFKMLVDVFAPEFRRPKNIHLRNFYIIVPPLTLNFVEHSISCKEKLNKKNKLGAAFTDDGFAMGVAYTLKLLDQYQEFDSLHWFQSVREKYIKEIRAVAKQQNVQSTSQDEKLLQTMNLTQKRLEVYLQEFELLYFSLSSARIFFRADKTAAEENQEKKEKEEETKTSNGDGPESTVSADPVVK</sequence>
<feature type="initiator methionine" description="Removed" evidence="1">
    <location>
        <position position="1"/>
    </location>
</feature>
<feature type="chain" id="PRO_0000282576" description="WASH complex subunit 4">
    <location>
        <begin position="2"/>
        <end position="1173"/>
    </location>
</feature>
<feature type="region of interest" description="Sufficient for interaction with WASHC5" evidence="1">
    <location>
        <begin position="705"/>
        <end position="1173"/>
    </location>
</feature>
<feature type="region of interest" description="Disordered" evidence="3">
    <location>
        <begin position="1141"/>
        <end position="1173"/>
    </location>
</feature>
<feature type="coiled-coil region" evidence="2">
    <location>
        <begin position="27"/>
        <end position="56"/>
    </location>
</feature>
<feature type="compositionally biased region" description="Basic and acidic residues" evidence="3">
    <location>
        <begin position="1141"/>
        <end position="1155"/>
    </location>
</feature>
<feature type="modified residue" description="N-acetylalanine" evidence="1">
    <location>
        <position position="2"/>
    </location>
</feature>
<feature type="modified residue" description="Phosphoserine" evidence="1">
    <location>
        <position position="7"/>
    </location>
</feature>
<feature type="modified residue" description="Phosphothreonine" evidence="1">
    <location>
        <position position="1154"/>
    </location>
</feature>
<protein>
    <recommendedName>
        <fullName evidence="6">WASH complex subunit 4</fullName>
    </recommendedName>
    <alternativeName>
        <fullName evidence="4">WASH complex subunit SWIP</fullName>
    </alternativeName>
</protein>
<reference key="1">
    <citation type="journal article" date="2009" name="PLoS Biol.">
        <title>Lineage-specific biology revealed by a finished genome assembly of the mouse.</title>
        <authorList>
            <person name="Church D.M."/>
            <person name="Goodstadt L."/>
            <person name="Hillier L.W."/>
            <person name="Zody M.C."/>
            <person name="Goldstein S."/>
            <person name="She X."/>
            <person name="Bult C.J."/>
            <person name="Agarwala R."/>
            <person name="Cherry J.L."/>
            <person name="DiCuccio M."/>
            <person name="Hlavina W."/>
            <person name="Kapustin Y."/>
            <person name="Meric P."/>
            <person name="Maglott D."/>
            <person name="Birtle Z."/>
            <person name="Marques A.C."/>
            <person name="Graves T."/>
            <person name="Zhou S."/>
            <person name="Teague B."/>
            <person name="Potamousis K."/>
            <person name="Churas C."/>
            <person name="Place M."/>
            <person name="Herschleb J."/>
            <person name="Runnheim R."/>
            <person name="Forrest D."/>
            <person name="Amos-Landgraf J."/>
            <person name="Schwartz D.C."/>
            <person name="Cheng Z."/>
            <person name="Lindblad-Toh K."/>
            <person name="Eichler E.E."/>
            <person name="Ponting C.P."/>
        </authorList>
    </citation>
    <scope>NUCLEOTIDE SEQUENCE [LARGE SCALE GENOMIC DNA]</scope>
    <source>
        <strain>C57BL/6J</strain>
    </source>
</reference>
<reference key="2">
    <citation type="journal article" date="2005" name="Science">
        <title>The transcriptional landscape of the mammalian genome.</title>
        <authorList>
            <person name="Carninci P."/>
            <person name="Kasukawa T."/>
            <person name="Katayama S."/>
            <person name="Gough J."/>
            <person name="Frith M.C."/>
            <person name="Maeda N."/>
            <person name="Oyama R."/>
            <person name="Ravasi T."/>
            <person name="Lenhard B."/>
            <person name="Wells C."/>
            <person name="Kodzius R."/>
            <person name="Shimokawa K."/>
            <person name="Bajic V.B."/>
            <person name="Brenner S.E."/>
            <person name="Batalov S."/>
            <person name="Forrest A.R."/>
            <person name="Zavolan M."/>
            <person name="Davis M.J."/>
            <person name="Wilming L.G."/>
            <person name="Aidinis V."/>
            <person name="Allen J.E."/>
            <person name="Ambesi-Impiombato A."/>
            <person name="Apweiler R."/>
            <person name="Aturaliya R.N."/>
            <person name="Bailey T.L."/>
            <person name="Bansal M."/>
            <person name="Baxter L."/>
            <person name="Beisel K.W."/>
            <person name="Bersano T."/>
            <person name="Bono H."/>
            <person name="Chalk A.M."/>
            <person name="Chiu K.P."/>
            <person name="Choudhary V."/>
            <person name="Christoffels A."/>
            <person name="Clutterbuck D.R."/>
            <person name="Crowe M.L."/>
            <person name="Dalla E."/>
            <person name="Dalrymple B.P."/>
            <person name="de Bono B."/>
            <person name="Della Gatta G."/>
            <person name="di Bernardo D."/>
            <person name="Down T."/>
            <person name="Engstrom P."/>
            <person name="Fagiolini M."/>
            <person name="Faulkner G."/>
            <person name="Fletcher C.F."/>
            <person name="Fukushima T."/>
            <person name="Furuno M."/>
            <person name="Futaki S."/>
            <person name="Gariboldi M."/>
            <person name="Georgii-Hemming P."/>
            <person name="Gingeras T.R."/>
            <person name="Gojobori T."/>
            <person name="Green R.E."/>
            <person name="Gustincich S."/>
            <person name="Harbers M."/>
            <person name="Hayashi Y."/>
            <person name="Hensch T.K."/>
            <person name="Hirokawa N."/>
            <person name="Hill D."/>
            <person name="Huminiecki L."/>
            <person name="Iacono M."/>
            <person name="Ikeo K."/>
            <person name="Iwama A."/>
            <person name="Ishikawa T."/>
            <person name="Jakt M."/>
            <person name="Kanapin A."/>
            <person name="Katoh M."/>
            <person name="Kawasawa Y."/>
            <person name="Kelso J."/>
            <person name="Kitamura H."/>
            <person name="Kitano H."/>
            <person name="Kollias G."/>
            <person name="Krishnan S.P."/>
            <person name="Kruger A."/>
            <person name="Kummerfeld S.K."/>
            <person name="Kurochkin I.V."/>
            <person name="Lareau L.F."/>
            <person name="Lazarevic D."/>
            <person name="Lipovich L."/>
            <person name="Liu J."/>
            <person name="Liuni S."/>
            <person name="McWilliam S."/>
            <person name="Madan Babu M."/>
            <person name="Madera M."/>
            <person name="Marchionni L."/>
            <person name="Matsuda H."/>
            <person name="Matsuzawa S."/>
            <person name="Miki H."/>
            <person name="Mignone F."/>
            <person name="Miyake S."/>
            <person name="Morris K."/>
            <person name="Mottagui-Tabar S."/>
            <person name="Mulder N."/>
            <person name="Nakano N."/>
            <person name="Nakauchi H."/>
            <person name="Ng P."/>
            <person name="Nilsson R."/>
            <person name="Nishiguchi S."/>
            <person name="Nishikawa S."/>
            <person name="Nori F."/>
            <person name="Ohara O."/>
            <person name="Okazaki Y."/>
            <person name="Orlando V."/>
            <person name="Pang K.C."/>
            <person name="Pavan W.J."/>
            <person name="Pavesi G."/>
            <person name="Pesole G."/>
            <person name="Petrovsky N."/>
            <person name="Piazza S."/>
            <person name="Reed J."/>
            <person name="Reid J.F."/>
            <person name="Ring B.Z."/>
            <person name="Ringwald M."/>
            <person name="Rost B."/>
            <person name="Ruan Y."/>
            <person name="Salzberg S.L."/>
            <person name="Sandelin A."/>
            <person name="Schneider C."/>
            <person name="Schoenbach C."/>
            <person name="Sekiguchi K."/>
            <person name="Semple C.A."/>
            <person name="Seno S."/>
            <person name="Sessa L."/>
            <person name="Sheng Y."/>
            <person name="Shibata Y."/>
            <person name="Shimada H."/>
            <person name="Shimada K."/>
            <person name="Silva D."/>
            <person name="Sinclair B."/>
            <person name="Sperling S."/>
            <person name="Stupka E."/>
            <person name="Sugiura K."/>
            <person name="Sultana R."/>
            <person name="Takenaka Y."/>
            <person name="Taki K."/>
            <person name="Tammoja K."/>
            <person name="Tan S.L."/>
            <person name="Tang S."/>
            <person name="Taylor M.S."/>
            <person name="Tegner J."/>
            <person name="Teichmann S.A."/>
            <person name="Ueda H.R."/>
            <person name="van Nimwegen E."/>
            <person name="Verardo R."/>
            <person name="Wei C.L."/>
            <person name="Yagi K."/>
            <person name="Yamanishi H."/>
            <person name="Zabarovsky E."/>
            <person name="Zhu S."/>
            <person name="Zimmer A."/>
            <person name="Hide W."/>
            <person name="Bult C."/>
            <person name="Grimmond S.M."/>
            <person name="Teasdale R.D."/>
            <person name="Liu E.T."/>
            <person name="Brusic V."/>
            <person name="Quackenbush J."/>
            <person name="Wahlestedt C."/>
            <person name="Mattick J.S."/>
            <person name="Hume D.A."/>
            <person name="Kai C."/>
            <person name="Sasaki D."/>
            <person name="Tomaru Y."/>
            <person name="Fukuda S."/>
            <person name="Kanamori-Katayama M."/>
            <person name="Suzuki M."/>
            <person name="Aoki J."/>
            <person name="Arakawa T."/>
            <person name="Iida J."/>
            <person name="Imamura K."/>
            <person name="Itoh M."/>
            <person name="Kato T."/>
            <person name="Kawaji H."/>
            <person name="Kawagashira N."/>
            <person name="Kawashima T."/>
            <person name="Kojima M."/>
            <person name="Kondo S."/>
            <person name="Konno H."/>
            <person name="Nakano K."/>
            <person name="Ninomiya N."/>
            <person name="Nishio T."/>
            <person name="Okada M."/>
            <person name="Plessy C."/>
            <person name="Shibata K."/>
            <person name="Shiraki T."/>
            <person name="Suzuki S."/>
            <person name="Tagami M."/>
            <person name="Waki K."/>
            <person name="Watahiki A."/>
            <person name="Okamura-Oho Y."/>
            <person name="Suzuki H."/>
            <person name="Kawai J."/>
            <person name="Hayashizaki Y."/>
        </authorList>
    </citation>
    <scope>NUCLEOTIDE SEQUENCE [LARGE SCALE MRNA] OF 1-1145 AND 818-1173</scope>
    <source>
        <strain>C57BL/6J</strain>
        <tissue>Hypothalamus</tissue>
        <tissue>Mammary gland</tissue>
        <tissue>Testis</tissue>
    </source>
</reference>
<reference key="3">
    <citation type="journal article" date="2004" name="Genome Res.">
        <title>The status, quality, and expansion of the NIH full-length cDNA project: the Mammalian Gene Collection (MGC).</title>
        <authorList>
            <consortium name="The MGC Project Team"/>
        </authorList>
    </citation>
    <scope>NUCLEOTIDE SEQUENCE [LARGE SCALE MRNA] OF 89-1145</scope>
    <source>
        <strain>Czech II</strain>
        <tissue>Mammary tumor</tissue>
    </source>
</reference>
<reference key="4">
    <citation type="journal article" date="2003" name="DNA Res.">
        <title>Prediction of the coding sequences of mouse homologues of KIAA gene: III. The complete nucleotide sequences of 500 mouse KIAA-homologous cDNAs identified by screening of terminal sequences of cDNA clones randomly sampled from size-fractionated libraries.</title>
        <authorList>
            <person name="Okazaki N."/>
            <person name="Kikuno R."/>
            <person name="Ohara R."/>
            <person name="Inamoto S."/>
            <person name="Koseki H."/>
            <person name="Hiraoka S."/>
            <person name="Saga Y."/>
            <person name="Nagase T."/>
            <person name="Ohara O."/>
            <person name="Koga H."/>
        </authorList>
    </citation>
    <scope>NUCLEOTIDE SEQUENCE [LARGE SCALE MRNA] OF 124-1173</scope>
    <source>
        <tissue>Brain</tissue>
    </source>
</reference>
<reference key="5">
    <citation type="journal article" date="2009" name="Dev. Cell">
        <title>The Arp2/3 activator WASH controls the fission of endosomes through a large multiprotein complex.</title>
        <authorList>
            <person name="Derivery E."/>
            <person name="Sousa C."/>
            <person name="Gautier J.J."/>
            <person name="Lombard B."/>
            <person name="Loew D."/>
            <person name="Gautreau A."/>
        </authorList>
    </citation>
    <scope>FUNCTION OF THE WASH COMPLEX</scope>
</reference>
<reference key="6">
    <citation type="journal article" date="2010" name="Cell">
        <title>A tissue-specific atlas of mouse protein phosphorylation and expression.</title>
        <authorList>
            <person name="Huttlin E.L."/>
            <person name="Jedrychowski M.P."/>
            <person name="Elias J.E."/>
            <person name="Goswami T."/>
            <person name="Rad R."/>
            <person name="Beausoleil S.A."/>
            <person name="Villen J."/>
            <person name="Haas W."/>
            <person name="Sowa M.E."/>
            <person name="Gygi S.P."/>
        </authorList>
    </citation>
    <scope>IDENTIFICATION BY MASS SPECTROMETRY [LARGE SCALE ANALYSIS]</scope>
    <source>
        <tissue>Brain</tissue>
        <tissue>Brown adipose tissue</tissue>
        <tissue>Heart</tissue>
        <tissue>Kidney</tissue>
        <tissue>Liver</tissue>
        <tissue>Lung</tissue>
        <tissue>Pancreas</tissue>
        <tissue>Spleen</tissue>
        <tissue>Testis</tissue>
    </source>
</reference>
<proteinExistence type="evidence at protein level"/>
<accession>Q3UMB9</accession>
<accession>Q3TTQ9</accession>
<accession>Q6ZPZ7</accession>
<accession>Q8CAK8</accession>
<accession>Q8CGK0</accession>
<evidence type="ECO:0000250" key="1">
    <source>
        <dbReference type="UniProtKB" id="Q2M389"/>
    </source>
</evidence>
<evidence type="ECO:0000255" key="2"/>
<evidence type="ECO:0000256" key="3">
    <source>
        <dbReference type="SAM" id="MobiDB-lite"/>
    </source>
</evidence>
<evidence type="ECO:0000305" key="4"/>
<evidence type="ECO:0000305" key="5">
    <source>
    </source>
</evidence>
<evidence type="ECO:0000312" key="6">
    <source>
        <dbReference type="MGI" id="MGI:2441787"/>
    </source>
</evidence>
<keyword id="KW-0007">Acetylation</keyword>
<keyword id="KW-0175">Coiled coil</keyword>
<keyword id="KW-0967">Endosome</keyword>
<keyword id="KW-0597">Phosphoprotein</keyword>
<keyword id="KW-0653">Protein transport</keyword>
<keyword id="KW-1185">Reference proteome</keyword>
<keyword id="KW-0813">Transport</keyword>
<comment type="function">
    <text evidence="5">Acts as a component of the WASH core complex that functions as a nucleation-promoting factor (NPF) at the surface of endosomes, where it recruits and activates the Arp2/3 complex to induce actin polymerization, playing a key role in the fission of tubules that serve as transport intermediates during endosome sorting.</text>
</comment>
<comment type="subunit">
    <text evidence="1">Component of the WASH core complex also described as WASH regulatory complex (SHRC) composed of WASH (WASHC1, WASH2P or WASH3P), WASHC2 (WASHC2A or WASHC2C), WASHC3, WASHC4 and WASHC5. The WASH core complex associates via WASHC2 with the F-actin-capping protein dimer (formed by CAPZA1, CAPZA2 or CAPZA3 and CAPZB) in a transient or substoichiometric manner which was initially described as WASH complex (By similarity).</text>
</comment>
<comment type="subcellular location">
    <subcellularLocation>
        <location evidence="1">Early endosome</location>
    </subcellularLocation>
</comment>
<comment type="similarity">
    <text evidence="4">Belongs to the SWIP family.</text>
</comment>
<comment type="sequence caution" evidence="4">
    <conflict type="erroneous initiation">
        <sequence resource="EMBL-CDS" id="AAH20314"/>
    </conflict>
    <text>Truncated N-terminus.</text>
</comment>
<comment type="sequence caution" evidence="4">
    <conflict type="miscellaneous discrepancy">
        <sequence resource="EMBL-CDS" id="AAH20314"/>
    </conflict>
    <text>Contaminating sequence. Potential poly-A sequence.</text>
</comment>
<comment type="sequence caution" evidence="4">
    <conflict type="erroneous initiation">
        <sequence resource="EMBL-CDS" id="BAE36266"/>
    </conflict>
    <text>Truncated N-terminus.</text>
</comment>
<dbReference type="EMBL" id="AC153508">
    <property type="status" value="NOT_ANNOTATED_CDS"/>
    <property type="molecule type" value="Genomic_DNA"/>
</dbReference>
<dbReference type="EMBL" id="AK038582">
    <property type="protein sequence ID" value="BAC30055.1"/>
    <property type="molecule type" value="mRNA"/>
</dbReference>
<dbReference type="EMBL" id="AK145000">
    <property type="protein sequence ID" value="BAE26179.1"/>
    <property type="molecule type" value="mRNA"/>
</dbReference>
<dbReference type="EMBL" id="AK161247">
    <property type="protein sequence ID" value="BAE36266.1"/>
    <property type="status" value="ALT_INIT"/>
    <property type="molecule type" value="mRNA"/>
</dbReference>
<dbReference type="EMBL" id="AK166233">
    <property type="protein sequence ID" value="BAE38648.1"/>
    <property type="molecule type" value="mRNA"/>
</dbReference>
<dbReference type="EMBL" id="BC020314">
    <property type="protein sequence ID" value="AAH20314.1"/>
    <property type="status" value="ALT_SEQ"/>
    <property type="molecule type" value="mRNA"/>
</dbReference>
<dbReference type="EMBL" id="AK129269">
    <property type="protein sequence ID" value="BAC98079.1"/>
    <property type="molecule type" value="mRNA"/>
</dbReference>
<dbReference type="CCDS" id="CCDS36015.1"/>
<dbReference type="RefSeq" id="NP_001028547.2">
    <property type="nucleotide sequence ID" value="NM_001033375.2"/>
</dbReference>
<dbReference type="BioGRID" id="235172">
    <property type="interactions" value="4"/>
</dbReference>
<dbReference type="ComplexPortal" id="CPX-1177">
    <property type="entry name" value="WASH complex, variant WASHC1/WASHC2"/>
</dbReference>
<dbReference type="FunCoup" id="Q3UMB9">
    <property type="interactions" value="3567"/>
</dbReference>
<dbReference type="STRING" id="10090.ENSMUSP00000039322"/>
<dbReference type="GlyGen" id="Q3UMB9">
    <property type="glycosylation" value="2 sites, 1 O-linked glycan (2 sites)"/>
</dbReference>
<dbReference type="iPTMnet" id="Q3UMB9"/>
<dbReference type="PhosphoSitePlus" id="Q3UMB9"/>
<dbReference type="SwissPalm" id="Q3UMB9"/>
<dbReference type="jPOST" id="Q3UMB9"/>
<dbReference type="PaxDb" id="10090-ENSMUSP00000039322"/>
<dbReference type="PeptideAtlas" id="Q3UMB9"/>
<dbReference type="ProteomicsDB" id="297842"/>
<dbReference type="Pumba" id="Q3UMB9"/>
<dbReference type="Antibodypedia" id="56699">
    <property type="antibodies" value="40 antibodies from 14 providers"/>
</dbReference>
<dbReference type="Ensembl" id="ENSMUST00000038388.7">
    <property type="protein sequence ID" value="ENSMUSP00000039322.6"/>
    <property type="gene ID" value="ENSMUSG00000034560.7"/>
</dbReference>
<dbReference type="GeneID" id="319277"/>
<dbReference type="KEGG" id="mmu:319277"/>
<dbReference type="UCSC" id="uc007gkj.1">
    <property type="organism name" value="mouse"/>
</dbReference>
<dbReference type="AGR" id="MGI:2441787"/>
<dbReference type="CTD" id="23325"/>
<dbReference type="MGI" id="MGI:2441787">
    <property type="gene designation" value="Washc4"/>
</dbReference>
<dbReference type="VEuPathDB" id="HostDB:ENSMUSG00000034560"/>
<dbReference type="eggNOG" id="KOG3578">
    <property type="taxonomic scope" value="Eukaryota"/>
</dbReference>
<dbReference type="GeneTree" id="ENSGT00390000002524"/>
<dbReference type="HOGENOM" id="CLU_002451_0_0_1"/>
<dbReference type="InParanoid" id="Q3UMB9"/>
<dbReference type="OMA" id="RCNIFIQ"/>
<dbReference type="OrthoDB" id="10261210at2759"/>
<dbReference type="PhylomeDB" id="Q3UMB9"/>
<dbReference type="TreeFam" id="TF324604"/>
<dbReference type="BioGRID-ORCS" id="319277">
    <property type="hits" value="12 hits in 76 CRISPR screens"/>
</dbReference>
<dbReference type="PRO" id="PR:Q3UMB9"/>
<dbReference type="Proteomes" id="UP000000589">
    <property type="component" value="Chromosome 10"/>
</dbReference>
<dbReference type="RNAct" id="Q3UMB9">
    <property type="molecule type" value="protein"/>
</dbReference>
<dbReference type="Bgee" id="ENSMUSG00000034560">
    <property type="expression patterns" value="Expressed in uterus and 66 other cell types or tissues"/>
</dbReference>
<dbReference type="ExpressionAtlas" id="Q3UMB9">
    <property type="expression patterns" value="baseline and differential"/>
</dbReference>
<dbReference type="GO" id="GO:0031083">
    <property type="term" value="C:BLOC-1 complex"/>
    <property type="evidence" value="ECO:0007669"/>
    <property type="project" value="Ensembl"/>
</dbReference>
<dbReference type="GO" id="GO:0031901">
    <property type="term" value="C:early endosome membrane"/>
    <property type="evidence" value="ECO:0000303"/>
    <property type="project" value="ComplexPortal"/>
</dbReference>
<dbReference type="GO" id="GO:0005768">
    <property type="term" value="C:endosome"/>
    <property type="evidence" value="ECO:0000314"/>
    <property type="project" value="MGI"/>
</dbReference>
<dbReference type="GO" id="GO:0005654">
    <property type="term" value="C:nucleoplasm"/>
    <property type="evidence" value="ECO:0007669"/>
    <property type="project" value="Ensembl"/>
</dbReference>
<dbReference type="GO" id="GO:0071203">
    <property type="term" value="C:WASH complex"/>
    <property type="evidence" value="ECO:0000314"/>
    <property type="project" value="MGI"/>
</dbReference>
<dbReference type="GO" id="GO:0050890">
    <property type="term" value="P:cognition"/>
    <property type="evidence" value="ECO:0000315"/>
    <property type="project" value="MGI"/>
</dbReference>
<dbReference type="GO" id="GO:0140894">
    <property type="term" value="P:endolysosomal toll-like receptor signaling pathway"/>
    <property type="evidence" value="ECO:0000315"/>
    <property type="project" value="MGI"/>
</dbReference>
<dbReference type="GO" id="GO:0016197">
    <property type="term" value="P:endosomal transport"/>
    <property type="evidence" value="ECO:0000315"/>
    <property type="project" value="UniProtKB"/>
</dbReference>
<dbReference type="GO" id="GO:0007032">
    <property type="term" value="P:endosome organization"/>
    <property type="evidence" value="ECO:0007669"/>
    <property type="project" value="Ensembl"/>
</dbReference>
<dbReference type="GO" id="GO:0050905">
    <property type="term" value="P:neuromuscular process"/>
    <property type="evidence" value="ECO:0000315"/>
    <property type="project" value="MGI"/>
</dbReference>
<dbReference type="GO" id="GO:0015031">
    <property type="term" value="P:protein transport"/>
    <property type="evidence" value="ECO:0007669"/>
    <property type="project" value="UniProtKB-KW"/>
</dbReference>
<dbReference type="GO" id="GO:0034315">
    <property type="term" value="P:regulation of Arp2/3 complex-mediated actin nucleation"/>
    <property type="evidence" value="ECO:0000303"/>
    <property type="project" value="ComplexPortal"/>
</dbReference>
<dbReference type="GO" id="GO:0061635">
    <property type="term" value="P:regulation of protein complex stability"/>
    <property type="evidence" value="ECO:0000315"/>
    <property type="project" value="MGI"/>
</dbReference>
<dbReference type="InterPro" id="IPR028191">
    <property type="entry name" value="WASH-4_N"/>
</dbReference>
<dbReference type="InterPro" id="IPR028283">
    <property type="entry name" value="WASH-7_C"/>
</dbReference>
<dbReference type="InterPro" id="IPR028282">
    <property type="entry name" value="WASH-7_central"/>
</dbReference>
<dbReference type="InterPro" id="IPR027307">
    <property type="entry name" value="WASH7"/>
</dbReference>
<dbReference type="PANTHER" id="PTHR31409">
    <property type="entry name" value="WASH COMPLEX SUBUNIT 4"/>
    <property type="match status" value="1"/>
</dbReference>
<dbReference type="PANTHER" id="PTHR31409:SF0">
    <property type="entry name" value="WASH COMPLEX SUBUNIT 4"/>
    <property type="match status" value="1"/>
</dbReference>
<dbReference type="Pfam" id="PF14745">
    <property type="entry name" value="WASH-4_N"/>
    <property type="match status" value="1"/>
</dbReference>
<dbReference type="Pfam" id="PF14746">
    <property type="entry name" value="WASH-7_C"/>
    <property type="match status" value="1"/>
</dbReference>
<dbReference type="Pfam" id="PF14744">
    <property type="entry name" value="WASH-7_mid"/>
    <property type="match status" value="1"/>
</dbReference>
<name>WASC4_MOUSE</name>